<gene>
    <name evidence="1" type="primary">rlmE</name>
    <name evidence="1" type="synonym">ftsJ</name>
    <name evidence="1" type="synonym">rrmJ</name>
    <name type="ordered locus">Rleg2_0428</name>
</gene>
<reference key="1">
    <citation type="journal article" date="2010" name="Stand. Genomic Sci.">
        <title>Complete genome sequence of Rhizobium leguminosarum bv trifolii strain WSM2304, an effective microsymbiont of the South American clover Trifolium polymorphum.</title>
        <authorList>
            <person name="Reeve W."/>
            <person name="O'Hara G."/>
            <person name="Chain P."/>
            <person name="Ardley J."/>
            <person name="Brau L."/>
            <person name="Nandesena K."/>
            <person name="Tiwari R."/>
            <person name="Malfatti S."/>
            <person name="Kiss H."/>
            <person name="Lapidus A."/>
            <person name="Copeland A."/>
            <person name="Nolan M."/>
            <person name="Land M."/>
            <person name="Ivanova N."/>
            <person name="Mavromatis K."/>
            <person name="Markowitz V."/>
            <person name="Kyrpides N."/>
            <person name="Melino V."/>
            <person name="Denton M."/>
            <person name="Yates R."/>
            <person name="Howieson J."/>
        </authorList>
    </citation>
    <scope>NUCLEOTIDE SEQUENCE [LARGE SCALE GENOMIC DNA]</scope>
    <source>
        <strain>WSM2304</strain>
    </source>
</reference>
<name>RLME_RHILW</name>
<protein>
    <recommendedName>
        <fullName evidence="1">Ribosomal RNA large subunit methyltransferase E</fullName>
        <ecNumber evidence="1">2.1.1.166</ecNumber>
    </recommendedName>
    <alternativeName>
        <fullName evidence="1">23S rRNA Um2552 methyltransferase</fullName>
    </alternativeName>
    <alternativeName>
        <fullName evidence="1">rRNA (uridine-2'-O-)-methyltransferase</fullName>
    </alternativeName>
</protein>
<keyword id="KW-0963">Cytoplasm</keyword>
<keyword id="KW-0489">Methyltransferase</keyword>
<keyword id="KW-1185">Reference proteome</keyword>
<keyword id="KW-0698">rRNA processing</keyword>
<keyword id="KW-0949">S-adenosyl-L-methionine</keyword>
<keyword id="KW-0808">Transferase</keyword>
<dbReference type="EC" id="2.1.1.166" evidence="1"/>
<dbReference type="EMBL" id="CP001191">
    <property type="protein sequence ID" value="ACI53726.1"/>
    <property type="molecule type" value="Genomic_DNA"/>
</dbReference>
<dbReference type="RefSeq" id="WP_012556679.1">
    <property type="nucleotide sequence ID" value="NC_011369.1"/>
</dbReference>
<dbReference type="SMR" id="B5ZR94"/>
<dbReference type="STRING" id="395492.Rleg2_0428"/>
<dbReference type="KEGG" id="rlt:Rleg2_0428"/>
<dbReference type="eggNOG" id="COG0293">
    <property type="taxonomic scope" value="Bacteria"/>
</dbReference>
<dbReference type="HOGENOM" id="CLU_009422_4_0_5"/>
<dbReference type="Proteomes" id="UP000008330">
    <property type="component" value="Chromosome"/>
</dbReference>
<dbReference type="GO" id="GO:0005737">
    <property type="term" value="C:cytoplasm"/>
    <property type="evidence" value="ECO:0007669"/>
    <property type="project" value="UniProtKB-SubCell"/>
</dbReference>
<dbReference type="GO" id="GO:0008650">
    <property type="term" value="F:rRNA (uridine-2'-O-)-methyltransferase activity"/>
    <property type="evidence" value="ECO:0007669"/>
    <property type="project" value="UniProtKB-UniRule"/>
</dbReference>
<dbReference type="Gene3D" id="3.40.50.150">
    <property type="entry name" value="Vaccinia Virus protein VP39"/>
    <property type="match status" value="1"/>
</dbReference>
<dbReference type="HAMAP" id="MF_01547">
    <property type="entry name" value="RNA_methyltr_E"/>
    <property type="match status" value="1"/>
</dbReference>
<dbReference type="InterPro" id="IPR050082">
    <property type="entry name" value="RNA_methyltr_RlmE"/>
</dbReference>
<dbReference type="InterPro" id="IPR002877">
    <property type="entry name" value="RNA_MeTrfase_FtsJ_dom"/>
</dbReference>
<dbReference type="InterPro" id="IPR015507">
    <property type="entry name" value="rRNA-MeTfrase_E"/>
</dbReference>
<dbReference type="InterPro" id="IPR029063">
    <property type="entry name" value="SAM-dependent_MTases_sf"/>
</dbReference>
<dbReference type="PANTHER" id="PTHR10920">
    <property type="entry name" value="RIBOSOMAL RNA METHYLTRANSFERASE"/>
    <property type="match status" value="1"/>
</dbReference>
<dbReference type="PANTHER" id="PTHR10920:SF18">
    <property type="entry name" value="RRNA METHYLTRANSFERASE 2, MITOCHONDRIAL"/>
    <property type="match status" value="1"/>
</dbReference>
<dbReference type="Pfam" id="PF01728">
    <property type="entry name" value="FtsJ"/>
    <property type="match status" value="1"/>
</dbReference>
<dbReference type="PIRSF" id="PIRSF005461">
    <property type="entry name" value="23S_rRNA_mtase"/>
    <property type="match status" value="1"/>
</dbReference>
<dbReference type="SUPFAM" id="SSF53335">
    <property type="entry name" value="S-adenosyl-L-methionine-dependent methyltransferases"/>
    <property type="match status" value="1"/>
</dbReference>
<organism>
    <name type="scientific">Rhizobium leguminosarum bv. trifolii (strain WSM2304)</name>
    <dbReference type="NCBI Taxonomy" id="395492"/>
    <lineage>
        <taxon>Bacteria</taxon>
        <taxon>Pseudomonadati</taxon>
        <taxon>Pseudomonadota</taxon>
        <taxon>Alphaproteobacteria</taxon>
        <taxon>Hyphomicrobiales</taxon>
        <taxon>Rhizobiaceae</taxon>
        <taxon>Rhizobium/Agrobacterium group</taxon>
        <taxon>Rhizobium</taxon>
    </lineage>
</organism>
<comment type="function">
    <text evidence="1">Specifically methylates the uridine in position 2552 of 23S rRNA at the 2'-O position of the ribose in the fully assembled 50S ribosomal subunit.</text>
</comment>
<comment type="catalytic activity">
    <reaction evidence="1">
        <text>uridine(2552) in 23S rRNA + S-adenosyl-L-methionine = 2'-O-methyluridine(2552) in 23S rRNA + S-adenosyl-L-homocysteine + H(+)</text>
        <dbReference type="Rhea" id="RHEA:42720"/>
        <dbReference type="Rhea" id="RHEA-COMP:10202"/>
        <dbReference type="Rhea" id="RHEA-COMP:10203"/>
        <dbReference type="ChEBI" id="CHEBI:15378"/>
        <dbReference type="ChEBI" id="CHEBI:57856"/>
        <dbReference type="ChEBI" id="CHEBI:59789"/>
        <dbReference type="ChEBI" id="CHEBI:65315"/>
        <dbReference type="ChEBI" id="CHEBI:74478"/>
        <dbReference type="EC" id="2.1.1.166"/>
    </reaction>
</comment>
<comment type="subcellular location">
    <subcellularLocation>
        <location evidence="1">Cytoplasm</location>
    </subcellularLocation>
</comment>
<comment type="similarity">
    <text evidence="1">Belongs to the class I-like SAM-binding methyltransferase superfamily. RNA methyltransferase RlmE family.</text>
</comment>
<feature type="chain" id="PRO_1000195010" description="Ribosomal RNA large subunit methyltransferase E">
    <location>
        <begin position="1"/>
        <end position="239"/>
    </location>
</feature>
<feature type="region of interest" description="Disordered" evidence="2">
    <location>
        <begin position="1"/>
        <end position="20"/>
    </location>
</feature>
<feature type="compositionally biased region" description="Basic residues" evidence="2">
    <location>
        <begin position="11"/>
        <end position="20"/>
    </location>
</feature>
<feature type="active site" description="Proton acceptor" evidence="1">
    <location>
        <position position="184"/>
    </location>
</feature>
<feature type="binding site" evidence="1">
    <location>
        <position position="81"/>
    </location>
    <ligand>
        <name>S-adenosyl-L-methionine</name>
        <dbReference type="ChEBI" id="CHEBI:59789"/>
    </ligand>
</feature>
<feature type="binding site" evidence="1">
    <location>
        <position position="83"/>
    </location>
    <ligand>
        <name>S-adenosyl-L-methionine</name>
        <dbReference type="ChEBI" id="CHEBI:59789"/>
    </ligand>
</feature>
<feature type="binding site" evidence="1">
    <location>
        <position position="104"/>
    </location>
    <ligand>
        <name>S-adenosyl-L-methionine</name>
        <dbReference type="ChEBI" id="CHEBI:59789"/>
    </ligand>
</feature>
<feature type="binding site" evidence="1">
    <location>
        <position position="120"/>
    </location>
    <ligand>
        <name>S-adenosyl-L-methionine</name>
        <dbReference type="ChEBI" id="CHEBI:59789"/>
    </ligand>
</feature>
<feature type="binding site" evidence="1">
    <location>
        <position position="144"/>
    </location>
    <ligand>
        <name>S-adenosyl-L-methionine</name>
        <dbReference type="ChEBI" id="CHEBI:59789"/>
    </ligand>
</feature>
<sequence>MTKAPIAGNRTGRKLGQRVKNKKMKASSRQWLQRHINDPYVQRAQLEGYRARAAFKLLEIDEKHHILRGAKRIIDLGAAPGSWSQIAAKVTGSTDEDIRVAAIDFLEMAQLPGVKILQLDFLDPTAPEKLLEAVGGTPDLVISDMAAPTTGHHRTDHLRTMHLCEVAAQFAVEVLGEGGHFLTKTFQGGTERELLAMLKQNFRQVVHVKPNASRAESVEMFLLAKGFKGRKVEGDAEKA</sequence>
<proteinExistence type="inferred from homology"/>
<evidence type="ECO:0000255" key="1">
    <source>
        <dbReference type="HAMAP-Rule" id="MF_01547"/>
    </source>
</evidence>
<evidence type="ECO:0000256" key="2">
    <source>
        <dbReference type="SAM" id="MobiDB-lite"/>
    </source>
</evidence>
<accession>B5ZR94</accession>